<organism>
    <name type="scientific">Arabidopsis thaliana</name>
    <name type="common">Mouse-ear cress</name>
    <dbReference type="NCBI Taxonomy" id="3702"/>
    <lineage>
        <taxon>Eukaryota</taxon>
        <taxon>Viridiplantae</taxon>
        <taxon>Streptophyta</taxon>
        <taxon>Embryophyta</taxon>
        <taxon>Tracheophyta</taxon>
        <taxon>Spermatophyta</taxon>
        <taxon>Magnoliopsida</taxon>
        <taxon>eudicotyledons</taxon>
        <taxon>Gunneridae</taxon>
        <taxon>Pentapetalae</taxon>
        <taxon>rosids</taxon>
        <taxon>malvids</taxon>
        <taxon>Brassicales</taxon>
        <taxon>Brassicaceae</taxon>
        <taxon>Camelineae</taxon>
        <taxon>Arabidopsis</taxon>
    </lineage>
</organism>
<reference key="1">
    <citation type="journal article" date="1999" name="Plant Physiol.">
        <title>Arabidopsis 22-kilodalton peroxisomal membrane protein. Nucleotide sequence analysis and biochemical characterization.</title>
        <authorList>
            <person name="Tugal H.B."/>
            <person name="Pool M."/>
            <person name="Baker A."/>
        </authorList>
    </citation>
    <scope>NUCLEOTIDE SEQUENCE [MRNA]</scope>
    <scope>TISSUE SPECIFICITY</scope>
    <scope>SUBCELLULAR LOCATION</scope>
    <scope>DEVELOPMENTAL STAGE</scope>
    <scope>INDUCTION</scope>
    <source>
        <strain>cv. Columbia</strain>
    </source>
</reference>
<reference key="2">
    <citation type="journal article" date="1999" name="Nature">
        <title>Sequence and analysis of chromosome 4 of the plant Arabidopsis thaliana.</title>
        <authorList>
            <person name="Mayer K.F.X."/>
            <person name="Schueller C."/>
            <person name="Wambutt R."/>
            <person name="Murphy G."/>
            <person name="Volckaert G."/>
            <person name="Pohl T."/>
            <person name="Duesterhoeft A."/>
            <person name="Stiekema W."/>
            <person name="Entian K.-D."/>
            <person name="Terryn N."/>
            <person name="Harris B."/>
            <person name="Ansorge W."/>
            <person name="Brandt P."/>
            <person name="Grivell L.A."/>
            <person name="Rieger M."/>
            <person name="Weichselgartner M."/>
            <person name="de Simone V."/>
            <person name="Obermaier B."/>
            <person name="Mache R."/>
            <person name="Mueller M."/>
            <person name="Kreis M."/>
            <person name="Delseny M."/>
            <person name="Puigdomenech P."/>
            <person name="Watson M."/>
            <person name="Schmidtheini T."/>
            <person name="Reichert B."/>
            <person name="Portetelle D."/>
            <person name="Perez-Alonso M."/>
            <person name="Boutry M."/>
            <person name="Bancroft I."/>
            <person name="Vos P."/>
            <person name="Hoheisel J."/>
            <person name="Zimmermann W."/>
            <person name="Wedler H."/>
            <person name="Ridley P."/>
            <person name="Langham S.-A."/>
            <person name="McCullagh B."/>
            <person name="Bilham L."/>
            <person name="Robben J."/>
            <person name="van der Schueren J."/>
            <person name="Grymonprez B."/>
            <person name="Chuang Y.-J."/>
            <person name="Vandenbussche F."/>
            <person name="Braeken M."/>
            <person name="Weltjens I."/>
            <person name="Voet M."/>
            <person name="Bastiaens I."/>
            <person name="Aert R."/>
            <person name="Defoor E."/>
            <person name="Weitzenegger T."/>
            <person name="Bothe G."/>
            <person name="Ramsperger U."/>
            <person name="Hilbert H."/>
            <person name="Braun M."/>
            <person name="Holzer E."/>
            <person name="Brandt A."/>
            <person name="Peters S."/>
            <person name="van Staveren M."/>
            <person name="Dirkse W."/>
            <person name="Mooijman P."/>
            <person name="Klein Lankhorst R."/>
            <person name="Rose M."/>
            <person name="Hauf J."/>
            <person name="Koetter P."/>
            <person name="Berneiser S."/>
            <person name="Hempel S."/>
            <person name="Feldpausch M."/>
            <person name="Lamberth S."/>
            <person name="Van den Daele H."/>
            <person name="De Keyser A."/>
            <person name="Buysshaert C."/>
            <person name="Gielen J."/>
            <person name="Villarroel R."/>
            <person name="De Clercq R."/>
            <person name="van Montagu M."/>
            <person name="Rogers J."/>
            <person name="Cronin A."/>
            <person name="Quail M.A."/>
            <person name="Bray-Allen S."/>
            <person name="Clark L."/>
            <person name="Doggett J."/>
            <person name="Hall S."/>
            <person name="Kay M."/>
            <person name="Lennard N."/>
            <person name="McLay K."/>
            <person name="Mayes R."/>
            <person name="Pettett A."/>
            <person name="Rajandream M.A."/>
            <person name="Lyne M."/>
            <person name="Benes V."/>
            <person name="Rechmann S."/>
            <person name="Borkova D."/>
            <person name="Bloecker H."/>
            <person name="Scharfe M."/>
            <person name="Grimm M."/>
            <person name="Loehnert T.-H."/>
            <person name="Dose S."/>
            <person name="de Haan M."/>
            <person name="Maarse A.C."/>
            <person name="Schaefer M."/>
            <person name="Mueller-Auer S."/>
            <person name="Gabel C."/>
            <person name="Fuchs M."/>
            <person name="Fartmann B."/>
            <person name="Granderath K."/>
            <person name="Dauner D."/>
            <person name="Herzl A."/>
            <person name="Neumann S."/>
            <person name="Argiriou A."/>
            <person name="Vitale D."/>
            <person name="Liguori R."/>
            <person name="Piravandi E."/>
            <person name="Massenet O."/>
            <person name="Quigley F."/>
            <person name="Clabauld G."/>
            <person name="Muendlein A."/>
            <person name="Felber R."/>
            <person name="Schnabl S."/>
            <person name="Hiller R."/>
            <person name="Schmidt W."/>
            <person name="Lecharny A."/>
            <person name="Aubourg S."/>
            <person name="Chefdor F."/>
            <person name="Cooke R."/>
            <person name="Berger C."/>
            <person name="Monfort A."/>
            <person name="Casacuberta E."/>
            <person name="Gibbons T."/>
            <person name="Weber N."/>
            <person name="Vandenbol M."/>
            <person name="Bargues M."/>
            <person name="Terol J."/>
            <person name="Torres A."/>
            <person name="Perez-Perez A."/>
            <person name="Purnelle B."/>
            <person name="Bent E."/>
            <person name="Johnson S."/>
            <person name="Tacon D."/>
            <person name="Jesse T."/>
            <person name="Heijnen L."/>
            <person name="Schwarz S."/>
            <person name="Scholler P."/>
            <person name="Heber S."/>
            <person name="Francs P."/>
            <person name="Bielke C."/>
            <person name="Frishman D."/>
            <person name="Haase D."/>
            <person name="Lemcke K."/>
            <person name="Mewes H.-W."/>
            <person name="Stocker S."/>
            <person name="Zaccaria P."/>
            <person name="Bevan M."/>
            <person name="Wilson R.K."/>
            <person name="de la Bastide M."/>
            <person name="Habermann K."/>
            <person name="Parnell L."/>
            <person name="Dedhia N."/>
            <person name="Gnoj L."/>
            <person name="Schutz K."/>
            <person name="Huang E."/>
            <person name="Spiegel L."/>
            <person name="Sekhon M."/>
            <person name="Murray J."/>
            <person name="Sheet P."/>
            <person name="Cordes M."/>
            <person name="Abu-Threideh J."/>
            <person name="Stoneking T."/>
            <person name="Kalicki J."/>
            <person name="Graves T."/>
            <person name="Harmon G."/>
            <person name="Edwards J."/>
            <person name="Latreille P."/>
            <person name="Courtney L."/>
            <person name="Cloud J."/>
            <person name="Abbott A."/>
            <person name="Scott K."/>
            <person name="Johnson D."/>
            <person name="Minx P."/>
            <person name="Bentley D."/>
            <person name="Fulton B."/>
            <person name="Miller N."/>
            <person name="Greco T."/>
            <person name="Kemp K."/>
            <person name="Kramer J."/>
            <person name="Fulton L."/>
            <person name="Mardis E."/>
            <person name="Dante M."/>
            <person name="Pepin K."/>
            <person name="Hillier L.W."/>
            <person name="Nelson J."/>
            <person name="Spieth J."/>
            <person name="Ryan E."/>
            <person name="Andrews S."/>
            <person name="Geisel C."/>
            <person name="Layman D."/>
            <person name="Du H."/>
            <person name="Ali J."/>
            <person name="Berghoff A."/>
            <person name="Jones K."/>
            <person name="Drone K."/>
            <person name="Cotton M."/>
            <person name="Joshu C."/>
            <person name="Antonoiu B."/>
            <person name="Zidanic M."/>
            <person name="Strong C."/>
            <person name="Sun H."/>
            <person name="Lamar B."/>
            <person name="Yordan C."/>
            <person name="Ma P."/>
            <person name="Zhong J."/>
            <person name="Preston R."/>
            <person name="Vil D."/>
            <person name="Shekher M."/>
            <person name="Matero A."/>
            <person name="Shah R."/>
            <person name="Swaby I.K."/>
            <person name="O'Shaughnessy A."/>
            <person name="Rodriguez M."/>
            <person name="Hoffman J."/>
            <person name="Till S."/>
            <person name="Granat S."/>
            <person name="Shohdy N."/>
            <person name="Hasegawa A."/>
            <person name="Hameed A."/>
            <person name="Lodhi M."/>
            <person name="Johnson A."/>
            <person name="Chen E."/>
            <person name="Marra M.A."/>
            <person name="Martienssen R."/>
            <person name="McCombie W.R."/>
        </authorList>
    </citation>
    <scope>NUCLEOTIDE SEQUENCE [LARGE SCALE GENOMIC DNA]</scope>
    <source>
        <strain>cv. Columbia</strain>
    </source>
</reference>
<reference key="3">
    <citation type="journal article" date="2017" name="Plant J.">
        <title>Araport11: a complete reannotation of the Arabidopsis thaliana reference genome.</title>
        <authorList>
            <person name="Cheng C.Y."/>
            <person name="Krishnakumar V."/>
            <person name="Chan A.P."/>
            <person name="Thibaud-Nissen F."/>
            <person name="Schobel S."/>
            <person name="Town C.D."/>
        </authorList>
    </citation>
    <scope>GENOME REANNOTATION</scope>
    <source>
        <strain>cv. Columbia</strain>
    </source>
</reference>
<reference key="4">
    <citation type="journal article" date="2003" name="Science">
        <title>Empirical analysis of transcriptional activity in the Arabidopsis genome.</title>
        <authorList>
            <person name="Yamada K."/>
            <person name="Lim J."/>
            <person name="Dale J.M."/>
            <person name="Chen H."/>
            <person name="Shinn P."/>
            <person name="Palm C.J."/>
            <person name="Southwick A.M."/>
            <person name="Wu H.C."/>
            <person name="Kim C.J."/>
            <person name="Nguyen M."/>
            <person name="Pham P.K."/>
            <person name="Cheuk R.F."/>
            <person name="Karlin-Newmann G."/>
            <person name="Liu S.X."/>
            <person name="Lam B."/>
            <person name="Sakano H."/>
            <person name="Wu T."/>
            <person name="Yu G."/>
            <person name="Miranda M."/>
            <person name="Quach H.L."/>
            <person name="Tripp M."/>
            <person name="Chang C.H."/>
            <person name="Lee J.M."/>
            <person name="Toriumi M.J."/>
            <person name="Chan M.M."/>
            <person name="Tang C.C."/>
            <person name="Onodera C.S."/>
            <person name="Deng J.M."/>
            <person name="Akiyama K."/>
            <person name="Ansari Y."/>
            <person name="Arakawa T."/>
            <person name="Banh J."/>
            <person name="Banno F."/>
            <person name="Bowser L."/>
            <person name="Brooks S.Y."/>
            <person name="Carninci P."/>
            <person name="Chao Q."/>
            <person name="Choy N."/>
            <person name="Enju A."/>
            <person name="Goldsmith A.D."/>
            <person name="Gurjal M."/>
            <person name="Hansen N.F."/>
            <person name="Hayashizaki Y."/>
            <person name="Johnson-Hopson C."/>
            <person name="Hsuan V.W."/>
            <person name="Iida K."/>
            <person name="Karnes M."/>
            <person name="Khan S."/>
            <person name="Koesema E."/>
            <person name="Ishida J."/>
            <person name="Jiang P.X."/>
            <person name="Jones T."/>
            <person name="Kawai J."/>
            <person name="Kamiya A."/>
            <person name="Meyers C."/>
            <person name="Nakajima M."/>
            <person name="Narusaka M."/>
            <person name="Seki M."/>
            <person name="Sakurai T."/>
            <person name="Satou M."/>
            <person name="Tamse R."/>
            <person name="Vaysberg M."/>
            <person name="Wallender E.K."/>
            <person name="Wong C."/>
            <person name="Yamamura Y."/>
            <person name="Yuan S."/>
            <person name="Shinozaki K."/>
            <person name="Davis R.W."/>
            <person name="Theologis A."/>
            <person name="Ecker J.R."/>
        </authorList>
    </citation>
    <scope>NUCLEOTIDE SEQUENCE [LARGE SCALE MRNA]</scope>
    <source>
        <strain>cv. Columbia</strain>
    </source>
</reference>
<reference key="5">
    <citation type="journal article" date="2003" name="Plant Physiol.">
        <title>Characterization of the targeting signal of the Arabidopsis 22-kD integral peroxisomal membrane protein.</title>
        <authorList>
            <person name="Murphy M.A."/>
            <person name="Phillipson B.A."/>
            <person name="Baker A."/>
            <person name="Mullen R.T."/>
        </authorList>
    </citation>
    <scope>SUBCELLULAR LOCATION</scope>
    <scope>TOPOLOGY</scope>
    <scope>MUTAGENESIS OF 7-LYS-LYS-8; 14-TYR--LEU-18; 22-PRO--LYS-26; 49-LYS--ARG-54; 82-LYS--LYS-85 AND 92-LYS-LYS-93</scope>
</reference>
<evidence type="ECO:0000250" key="1"/>
<evidence type="ECO:0000255" key="2"/>
<evidence type="ECO:0000269" key="3">
    <source>
    </source>
</evidence>
<evidence type="ECO:0000269" key="4">
    <source>
    </source>
</evidence>
<evidence type="ECO:0000305" key="5"/>
<comment type="function">
    <text evidence="1">May be involved in the metabolism of reactive oxygen species.</text>
</comment>
<comment type="subcellular location">
    <subcellularLocation>
        <location evidence="3 4">Peroxisome membrane</location>
        <topology evidence="3 4">Multi-pass membrane protein</topology>
    </subcellularLocation>
</comment>
<comment type="tissue specificity">
    <text evidence="3">Ubiquitously expressed, higher levels in flowers and green siliques (at protein level).</text>
</comment>
<comment type="developmental stage">
    <text evidence="3">Accumulates after seeds imbibition (at protein level).</text>
</comment>
<comment type="similarity">
    <text evidence="5">Belongs to the peroxisomal membrane protein PXMP2/4 family.</text>
</comment>
<name>PMP22_ARATH</name>
<proteinExistence type="evidence at protein level"/>
<gene>
    <name type="primary">PMP22</name>
    <name type="ordered locus">At4g04470</name>
    <name type="ORF">T26N6.9</name>
</gene>
<protein>
    <recommendedName>
        <fullName>Peroxisomal membrane protein PMP22</fullName>
    </recommendedName>
    <alternativeName>
        <fullName>22 kDa peroxisomal membrane protein</fullName>
    </alternativeName>
</protein>
<dbReference type="EMBL" id="AJ006053">
    <property type="protein sequence ID" value="CAA06834.1"/>
    <property type="molecule type" value="mRNA"/>
</dbReference>
<dbReference type="EMBL" id="AF076243">
    <property type="protein sequence ID" value="AAD29759.1"/>
    <property type="molecule type" value="Genomic_DNA"/>
</dbReference>
<dbReference type="EMBL" id="AL161500">
    <property type="protein sequence ID" value="CAB77915.1"/>
    <property type="molecule type" value="Genomic_DNA"/>
</dbReference>
<dbReference type="EMBL" id="CP002687">
    <property type="protein sequence ID" value="AEE82392.1"/>
    <property type="molecule type" value="Genomic_DNA"/>
</dbReference>
<dbReference type="EMBL" id="CP002687">
    <property type="protein sequence ID" value="ANM67056.1"/>
    <property type="molecule type" value="Genomic_DNA"/>
</dbReference>
<dbReference type="EMBL" id="BT003055">
    <property type="protein sequence ID" value="AAO23620.1"/>
    <property type="molecule type" value="mRNA"/>
</dbReference>
<dbReference type="PIR" id="T51590">
    <property type="entry name" value="T51590"/>
</dbReference>
<dbReference type="RefSeq" id="NP_001319865.1">
    <property type="nucleotide sequence ID" value="NM_001340483.1"/>
</dbReference>
<dbReference type="RefSeq" id="NP_192356.1">
    <property type="nucleotide sequence ID" value="NM_116685.5"/>
</dbReference>
<dbReference type="SMR" id="Q9ZS51"/>
<dbReference type="FunCoup" id="Q9ZS51">
    <property type="interactions" value="1286"/>
</dbReference>
<dbReference type="STRING" id="3702.Q9ZS51"/>
<dbReference type="PaxDb" id="3702-AT4G04470.1"/>
<dbReference type="ProteomicsDB" id="226212"/>
<dbReference type="EnsemblPlants" id="AT4G04470.1">
    <property type="protein sequence ID" value="AT4G04470.1"/>
    <property type="gene ID" value="AT4G04470"/>
</dbReference>
<dbReference type="EnsemblPlants" id="AT4G04470.2">
    <property type="protein sequence ID" value="AT4G04470.2"/>
    <property type="gene ID" value="AT4G04470"/>
</dbReference>
<dbReference type="GeneID" id="825777"/>
<dbReference type="Gramene" id="AT4G04470.1">
    <property type="protein sequence ID" value="AT4G04470.1"/>
    <property type="gene ID" value="AT4G04470"/>
</dbReference>
<dbReference type="Gramene" id="AT4G04470.2">
    <property type="protein sequence ID" value="AT4G04470.2"/>
    <property type="gene ID" value="AT4G04470"/>
</dbReference>
<dbReference type="KEGG" id="ath:AT4G04470"/>
<dbReference type="Araport" id="AT4G04470"/>
<dbReference type="TAIR" id="AT4G04470">
    <property type="gene designation" value="PMP22"/>
</dbReference>
<dbReference type="eggNOG" id="KOG1944">
    <property type="taxonomic scope" value="Eukaryota"/>
</dbReference>
<dbReference type="HOGENOM" id="CLU_049109_9_0_1"/>
<dbReference type="InParanoid" id="Q9ZS51"/>
<dbReference type="OMA" id="CLGTFFN"/>
<dbReference type="OrthoDB" id="10267969at2759"/>
<dbReference type="PhylomeDB" id="Q9ZS51"/>
<dbReference type="PRO" id="PR:Q9ZS51"/>
<dbReference type="Proteomes" id="UP000006548">
    <property type="component" value="Chromosome 4"/>
</dbReference>
<dbReference type="ExpressionAtlas" id="Q9ZS51">
    <property type="expression patterns" value="baseline and differential"/>
</dbReference>
<dbReference type="GO" id="GO:0005778">
    <property type="term" value="C:peroxisomal membrane"/>
    <property type="evidence" value="ECO:0007669"/>
    <property type="project" value="UniProtKB-SubCell"/>
</dbReference>
<dbReference type="InterPro" id="IPR007248">
    <property type="entry name" value="Mpv17_PMP22"/>
</dbReference>
<dbReference type="PANTHER" id="PTHR11266">
    <property type="entry name" value="PEROXISOMAL MEMBRANE PROTEIN 2, PXMP2 MPV17"/>
    <property type="match status" value="1"/>
</dbReference>
<dbReference type="PANTHER" id="PTHR11266:SF86">
    <property type="entry name" value="PEROXISOMAL MEMBRANE PROTEIN PMP22"/>
    <property type="match status" value="1"/>
</dbReference>
<dbReference type="Pfam" id="PF04117">
    <property type="entry name" value="Mpv17_PMP22"/>
    <property type="match status" value="1"/>
</dbReference>
<accession>Q9ZS51</accession>
<keyword id="KW-0472">Membrane</keyword>
<keyword id="KW-0576">Peroxisome</keyword>
<keyword id="KW-1185">Reference proteome</keyword>
<keyword id="KW-0812">Transmembrane</keyword>
<keyword id="KW-1133">Transmembrane helix</keyword>
<sequence>MGSSPPKKTTLQRYLSQLQQHPLRTKAITAGVLSGVSDVVSQKLSGIQKIQLRRVLLKVIFAGGFLGPAGHFFHTYLDKFFKGKKDTQTVAKKVILEQLTLSPLNHLLFMIYYGVVIERTPWTLVRERIKKTYPTVQLTAWTFFPVVGWINYKYVPLHFRVILHSLVAFFWGIFLTLRARSMTLALAKAK</sequence>
<feature type="chain" id="PRO_0000218935" description="Peroxisomal membrane protein PMP22">
    <location>
        <begin position="1"/>
        <end position="190"/>
    </location>
</feature>
<feature type="topological domain" description="Cytoplasmic" evidence="2">
    <location>
        <begin position="1"/>
        <end position="54"/>
    </location>
</feature>
<feature type="transmembrane region" description="Helical" evidence="2">
    <location>
        <begin position="55"/>
        <end position="75"/>
    </location>
</feature>
<feature type="topological domain" description="Peroxisomal matrix" evidence="2">
    <location>
        <begin position="76"/>
        <end position="96"/>
    </location>
</feature>
<feature type="transmembrane region" description="Helical" evidence="2">
    <location>
        <begin position="97"/>
        <end position="117"/>
    </location>
</feature>
<feature type="topological domain" description="Cytoplasmic" evidence="2">
    <location>
        <begin position="118"/>
        <end position="131"/>
    </location>
</feature>
<feature type="transmembrane region" description="Helical" evidence="2">
    <location>
        <begin position="132"/>
        <end position="152"/>
    </location>
</feature>
<feature type="topological domain" description="Peroxisomal matrix" evidence="2">
    <location>
        <begin position="153"/>
        <end position="154"/>
    </location>
</feature>
<feature type="transmembrane region" description="Helical" evidence="2">
    <location>
        <begin position="155"/>
        <end position="175"/>
    </location>
</feature>
<feature type="topological domain" description="Cytoplasmic" evidence="2">
    <location>
        <begin position="176"/>
        <end position="190"/>
    </location>
</feature>
<feature type="mutagenesis site" description="Impaired in targeting to peroxisomes. Localized in endoplasmic reticulum instead of peroxisome; when associated with 14-GLSQG-18; 22-GLRTG-26, 49-GIQLGG-54 and 82-GGGG-85." evidence="4">
    <original>KK</original>
    <variation>GG</variation>
    <location>
        <begin position="7"/>
        <end position="8"/>
    </location>
</feature>
<feature type="mutagenesis site" description="Impaired in targeting to peroxisomes. Localized in endoplasmic reticulum instead of peroxisome; when associated with 7-GG-8; 22-GLRTG-26; 49-GIQLGG-54 and 82-GGGG-85." evidence="4">
    <original>YLSQL</original>
    <variation>GLSQG</variation>
    <location>
        <begin position="14"/>
        <end position="18"/>
    </location>
</feature>
<feature type="mutagenesis site" description="Impaired in targeting to peroxisomes. Localized in endoplasmic reticulum instead of peroxisome; when associated with 7-GG-8; 14-GLSQG-18; 49-GIQLGG-54 and 82-GGGG-85." evidence="4">
    <original>PLRTK</original>
    <variation>GLRTG</variation>
    <location>
        <begin position="22"/>
        <end position="26"/>
    </location>
</feature>
<feature type="mutagenesis site" description="Impaired in targeting to peroxisomes. Localized in endoplasmic reticulum instead of peroxisome; when associated with 7-GG-8; 14-GLSQG-18; 22-GLRTG-26 and 82-GGGG-85." evidence="4">
    <original>KIQLRR</original>
    <variation>GIQLGG</variation>
    <location>
        <begin position="49"/>
        <end position="54"/>
    </location>
</feature>
<feature type="mutagenesis site" description="Impaired in targeting to peroxisomes. Localized in endoplasmic reticulum instead of peroxisome; when associated with 7-GG-8; 14-GLSQG-18; 22-GLRTG-26 and 49-GIQLGG-54." evidence="4">
    <original>KGKK</original>
    <variation>GGGG</variation>
    <location>
        <begin position="82"/>
        <end position="85"/>
    </location>
</feature>
<feature type="mutagenesis site" description="No effect on targeting to peroxisomes." evidence="4">
    <original>KK</original>
    <variation>GG</variation>
    <location>
        <begin position="92"/>
        <end position="93"/>
    </location>
</feature>